<name>SUB2_CANGA</name>
<gene>
    <name type="primary">SUB2</name>
    <name type="ordered locus">CAGL0L06908g</name>
</gene>
<evidence type="ECO:0000250" key="1"/>
<evidence type="ECO:0000255" key="2">
    <source>
        <dbReference type="PROSITE-ProRule" id="PRU00541"/>
    </source>
</evidence>
<evidence type="ECO:0000255" key="3">
    <source>
        <dbReference type="PROSITE-ProRule" id="PRU00542"/>
    </source>
</evidence>
<evidence type="ECO:0000256" key="4">
    <source>
        <dbReference type="SAM" id="MobiDB-lite"/>
    </source>
</evidence>
<evidence type="ECO:0000305" key="5"/>
<organism>
    <name type="scientific">Candida glabrata (strain ATCC 2001 / BCRC 20586 / JCM 3761 / NBRC 0622 / NRRL Y-65 / CBS 138)</name>
    <name type="common">Yeast</name>
    <name type="synonym">Nakaseomyces glabratus</name>
    <dbReference type="NCBI Taxonomy" id="284593"/>
    <lineage>
        <taxon>Eukaryota</taxon>
        <taxon>Fungi</taxon>
        <taxon>Dikarya</taxon>
        <taxon>Ascomycota</taxon>
        <taxon>Saccharomycotina</taxon>
        <taxon>Saccharomycetes</taxon>
        <taxon>Saccharomycetales</taxon>
        <taxon>Saccharomycetaceae</taxon>
        <taxon>Nakaseomyces</taxon>
    </lineage>
</organism>
<proteinExistence type="inferred from homology"/>
<comment type="function">
    <text evidence="1">ATP-binding RNA helicase involved in transcription elongation and required for the export of mRNA out of the nucleus. SUB2 also plays a role in pre-mRNA splicing and spliceosome assembly. May be involved in rDNA and telomeric silencing, and maintenance of genome integrity (By similarity).</text>
</comment>
<comment type="catalytic activity">
    <reaction>
        <text>ATP + H2O = ADP + phosphate + H(+)</text>
        <dbReference type="Rhea" id="RHEA:13065"/>
        <dbReference type="ChEBI" id="CHEBI:15377"/>
        <dbReference type="ChEBI" id="CHEBI:15378"/>
        <dbReference type="ChEBI" id="CHEBI:30616"/>
        <dbReference type="ChEBI" id="CHEBI:43474"/>
        <dbReference type="ChEBI" id="CHEBI:456216"/>
        <dbReference type="EC" id="3.6.4.13"/>
    </reaction>
</comment>
<comment type="subcellular location">
    <subcellularLocation>
        <location evidence="1">Nucleus</location>
    </subcellularLocation>
</comment>
<comment type="domain">
    <text>The Q motif is unique to and characteristic of the DEAD box family of RNA helicases and controls ATP binding and hydrolysis.</text>
</comment>
<comment type="similarity">
    <text evidence="5">Belongs to the DEAD box helicase family. DECD subfamily.</text>
</comment>
<sequence>MSHEGEEDLLEYSDNEQEIQVDNKETAVEGTTENEATQENGEADKKGSYVGIHSTGFKDFLLKPELSRAIIDCGFEHPSEVQQHTIPQSIHGTDVLCQAKSGLGKTAVFVLSTLQQLDPVPGEVSVVVICNARELAYQIRNEYLRFSKYMPDVRTAVFYGGTPIAKDAELLKNKDTAPHIVVATPGRLKALVRDKMIDLSHVKNFVIDECDKVLEELDMRRDVQEIFRATPRDKQVMMFSATLSQEIRPICRRFLQNPLEIFVDDEAKLTLHGLQQYYIKLEEREKNRKLAQLLDDLEFNQVIIFVKSTSRANELTKLLNASNFPAITVHGHMKQEERIARYKAFKDFEKRICVSTDVFGRGIDIERINLAINYDLLNEADQYLHRVGRAGRFGTKGLAISFVSNKEDEEVLSKIQERFDVKIAEFPEEGIDPSTYLNN</sequence>
<keyword id="KW-0067">ATP-binding</keyword>
<keyword id="KW-0347">Helicase</keyword>
<keyword id="KW-0378">Hydrolase</keyword>
<keyword id="KW-0507">mRNA processing</keyword>
<keyword id="KW-0508">mRNA splicing</keyword>
<keyword id="KW-0509">mRNA transport</keyword>
<keyword id="KW-0547">Nucleotide-binding</keyword>
<keyword id="KW-0539">Nucleus</keyword>
<keyword id="KW-1185">Reference proteome</keyword>
<keyword id="KW-0694">RNA-binding</keyword>
<keyword id="KW-0747">Spliceosome</keyword>
<keyword id="KW-0813">Transport</keyword>
<dbReference type="EC" id="3.6.4.13"/>
<dbReference type="EMBL" id="CR380958">
    <property type="protein sequence ID" value="CAG62047.1"/>
    <property type="molecule type" value="Genomic_DNA"/>
</dbReference>
<dbReference type="RefSeq" id="XP_449077.1">
    <property type="nucleotide sequence ID" value="XM_449077.1"/>
</dbReference>
<dbReference type="SMR" id="Q6FL17"/>
<dbReference type="FunCoup" id="Q6FL17">
    <property type="interactions" value="1368"/>
</dbReference>
<dbReference type="STRING" id="284593.Q6FL17"/>
<dbReference type="EnsemblFungi" id="CAGL0L06908g-T">
    <property type="protein sequence ID" value="CAGL0L06908g-T-p1"/>
    <property type="gene ID" value="CAGL0L06908g"/>
</dbReference>
<dbReference type="KEGG" id="cgr:2890822"/>
<dbReference type="CGD" id="CAL0136102">
    <property type="gene designation" value="SUB2"/>
</dbReference>
<dbReference type="VEuPathDB" id="FungiDB:CAGL0L06908g"/>
<dbReference type="eggNOG" id="KOG0329">
    <property type="taxonomic scope" value="Eukaryota"/>
</dbReference>
<dbReference type="HOGENOM" id="CLU_003041_1_0_1"/>
<dbReference type="InParanoid" id="Q6FL17"/>
<dbReference type="OMA" id="YAHVEPK"/>
<dbReference type="Proteomes" id="UP000002428">
    <property type="component" value="Chromosome L"/>
</dbReference>
<dbReference type="GO" id="GO:0000781">
    <property type="term" value="C:chromosome, telomeric region"/>
    <property type="evidence" value="ECO:0007669"/>
    <property type="project" value="EnsemblFungi"/>
</dbReference>
<dbReference type="GO" id="GO:0062040">
    <property type="term" value="C:fungal biofilm matrix"/>
    <property type="evidence" value="ECO:0000314"/>
    <property type="project" value="CGD"/>
</dbReference>
<dbReference type="GO" id="GO:0005681">
    <property type="term" value="C:spliceosomal complex"/>
    <property type="evidence" value="ECO:0007669"/>
    <property type="project" value="UniProtKB-KW"/>
</dbReference>
<dbReference type="GO" id="GO:0000346">
    <property type="term" value="C:transcription export complex"/>
    <property type="evidence" value="ECO:0007669"/>
    <property type="project" value="EnsemblFungi"/>
</dbReference>
<dbReference type="GO" id="GO:0005524">
    <property type="term" value="F:ATP binding"/>
    <property type="evidence" value="ECO:0007669"/>
    <property type="project" value="UniProtKB-KW"/>
</dbReference>
<dbReference type="GO" id="GO:0016887">
    <property type="term" value="F:ATP hydrolysis activity"/>
    <property type="evidence" value="ECO:0007669"/>
    <property type="project" value="RHEA"/>
</dbReference>
<dbReference type="GO" id="GO:0003723">
    <property type="term" value="F:RNA binding"/>
    <property type="evidence" value="ECO:0007669"/>
    <property type="project" value="UniProtKB-KW"/>
</dbReference>
<dbReference type="GO" id="GO:0003724">
    <property type="term" value="F:RNA helicase activity"/>
    <property type="evidence" value="ECO:0007669"/>
    <property type="project" value="UniProtKB-EC"/>
</dbReference>
<dbReference type="GO" id="GO:0006879">
    <property type="term" value="P:intracellular iron ion homeostasis"/>
    <property type="evidence" value="ECO:0000315"/>
    <property type="project" value="CGD"/>
</dbReference>
<dbReference type="GO" id="GO:0031124">
    <property type="term" value="P:mRNA 3'-end processing"/>
    <property type="evidence" value="ECO:0007669"/>
    <property type="project" value="EnsemblFungi"/>
</dbReference>
<dbReference type="GO" id="GO:0006406">
    <property type="term" value="P:mRNA export from nucleus"/>
    <property type="evidence" value="ECO:0007669"/>
    <property type="project" value="EnsemblFungi"/>
</dbReference>
<dbReference type="GO" id="GO:0000398">
    <property type="term" value="P:mRNA splicing, via spliceosome"/>
    <property type="evidence" value="ECO:0007669"/>
    <property type="project" value="EnsemblFungi"/>
</dbReference>
<dbReference type="GO" id="GO:0045785">
    <property type="term" value="P:positive regulation of cell adhesion"/>
    <property type="evidence" value="ECO:0000315"/>
    <property type="project" value="CGD"/>
</dbReference>
<dbReference type="GO" id="GO:0016070">
    <property type="term" value="P:RNA metabolic process"/>
    <property type="evidence" value="ECO:0000314"/>
    <property type="project" value="CGD"/>
</dbReference>
<dbReference type="GO" id="GO:0031509">
    <property type="term" value="P:subtelomeric heterochromatin formation"/>
    <property type="evidence" value="ECO:0007669"/>
    <property type="project" value="EnsemblFungi"/>
</dbReference>
<dbReference type="GO" id="GO:0006368">
    <property type="term" value="P:transcription elongation by RNA polymerase II"/>
    <property type="evidence" value="ECO:0007669"/>
    <property type="project" value="EnsemblFungi"/>
</dbReference>
<dbReference type="GO" id="GO:0006283">
    <property type="term" value="P:transcription-coupled nucleotide-excision repair"/>
    <property type="evidence" value="ECO:0007669"/>
    <property type="project" value="EnsemblFungi"/>
</dbReference>
<dbReference type="CDD" id="cd17950">
    <property type="entry name" value="DEADc_DDX39"/>
    <property type="match status" value="1"/>
</dbReference>
<dbReference type="CDD" id="cd18787">
    <property type="entry name" value="SF2_C_DEAD"/>
    <property type="match status" value="1"/>
</dbReference>
<dbReference type="FunFam" id="3.40.50.300:FF:000809">
    <property type="entry name" value="ATP-dependent RNA helicase SUB2"/>
    <property type="match status" value="1"/>
</dbReference>
<dbReference type="FunFam" id="3.40.50.300:FF:000111">
    <property type="entry name" value="DEAD-box ATP-dependent RNA helicase"/>
    <property type="match status" value="1"/>
</dbReference>
<dbReference type="Gene3D" id="3.40.50.300">
    <property type="entry name" value="P-loop containing nucleotide triphosphate hydrolases"/>
    <property type="match status" value="2"/>
</dbReference>
<dbReference type="InterPro" id="IPR011545">
    <property type="entry name" value="DEAD/DEAH_box_helicase_dom"/>
</dbReference>
<dbReference type="InterPro" id="IPR014001">
    <property type="entry name" value="Helicase_ATP-bd"/>
</dbReference>
<dbReference type="InterPro" id="IPR001650">
    <property type="entry name" value="Helicase_C-like"/>
</dbReference>
<dbReference type="InterPro" id="IPR027417">
    <property type="entry name" value="P-loop_NTPase"/>
</dbReference>
<dbReference type="InterPro" id="IPR014014">
    <property type="entry name" value="RNA_helicase_DEAD_Q_motif"/>
</dbReference>
<dbReference type="PANTHER" id="PTHR47958">
    <property type="entry name" value="ATP-DEPENDENT RNA HELICASE DBP3"/>
    <property type="match status" value="1"/>
</dbReference>
<dbReference type="Pfam" id="PF00270">
    <property type="entry name" value="DEAD"/>
    <property type="match status" value="1"/>
</dbReference>
<dbReference type="Pfam" id="PF00271">
    <property type="entry name" value="Helicase_C"/>
    <property type="match status" value="1"/>
</dbReference>
<dbReference type="SMART" id="SM00487">
    <property type="entry name" value="DEXDc"/>
    <property type="match status" value="1"/>
</dbReference>
<dbReference type="SMART" id="SM00490">
    <property type="entry name" value="HELICc"/>
    <property type="match status" value="1"/>
</dbReference>
<dbReference type="SUPFAM" id="SSF52540">
    <property type="entry name" value="P-loop containing nucleoside triphosphate hydrolases"/>
    <property type="match status" value="1"/>
</dbReference>
<dbReference type="PROSITE" id="PS51192">
    <property type="entry name" value="HELICASE_ATP_BIND_1"/>
    <property type="match status" value="1"/>
</dbReference>
<dbReference type="PROSITE" id="PS51194">
    <property type="entry name" value="HELICASE_CTER"/>
    <property type="match status" value="1"/>
</dbReference>
<dbReference type="PROSITE" id="PS51195">
    <property type="entry name" value="Q_MOTIF"/>
    <property type="match status" value="1"/>
</dbReference>
<protein>
    <recommendedName>
        <fullName>ATP-dependent RNA helicase SUB2</fullName>
        <ecNumber>3.6.4.13</ecNumber>
    </recommendedName>
</protein>
<reference key="1">
    <citation type="journal article" date="2004" name="Nature">
        <title>Genome evolution in yeasts.</title>
        <authorList>
            <person name="Dujon B."/>
            <person name="Sherman D."/>
            <person name="Fischer G."/>
            <person name="Durrens P."/>
            <person name="Casaregola S."/>
            <person name="Lafontaine I."/>
            <person name="de Montigny J."/>
            <person name="Marck C."/>
            <person name="Neuveglise C."/>
            <person name="Talla E."/>
            <person name="Goffard N."/>
            <person name="Frangeul L."/>
            <person name="Aigle M."/>
            <person name="Anthouard V."/>
            <person name="Babour A."/>
            <person name="Barbe V."/>
            <person name="Barnay S."/>
            <person name="Blanchin S."/>
            <person name="Beckerich J.-M."/>
            <person name="Beyne E."/>
            <person name="Bleykasten C."/>
            <person name="Boisrame A."/>
            <person name="Boyer J."/>
            <person name="Cattolico L."/>
            <person name="Confanioleri F."/>
            <person name="de Daruvar A."/>
            <person name="Despons L."/>
            <person name="Fabre E."/>
            <person name="Fairhead C."/>
            <person name="Ferry-Dumazet H."/>
            <person name="Groppi A."/>
            <person name="Hantraye F."/>
            <person name="Hennequin C."/>
            <person name="Jauniaux N."/>
            <person name="Joyet P."/>
            <person name="Kachouri R."/>
            <person name="Kerrest A."/>
            <person name="Koszul R."/>
            <person name="Lemaire M."/>
            <person name="Lesur I."/>
            <person name="Ma L."/>
            <person name="Muller H."/>
            <person name="Nicaud J.-M."/>
            <person name="Nikolski M."/>
            <person name="Oztas S."/>
            <person name="Ozier-Kalogeropoulos O."/>
            <person name="Pellenz S."/>
            <person name="Potier S."/>
            <person name="Richard G.-F."/>
            <person name="Straub M.-L."/>
            <person name="Suleau A."/>
            <person name="Swennen D."/>
            <person name="Tekaia F."/>
            <person name="Wesolowski-Louvel M."/>
            <person name="Westhof E."/>
            <person name="Wirth B."/>
            <person name="Zeniou-Meyer M."/>
            <person name="Zivanovic Y."/>
            <person name="Bolotin-Fukuhara M."/>
            <person name="Thierry A."/>
            <person name="Bouchier C."/>
            <person name="Caudron B."/>
            <person name="Scarpelli C."/>
            <person name="Gaillardin C."/>
            <person name="Weissenbach J."/>
            <person name="Wincker P."/>
            <person name="Souciet J.-L."/>
        </authorList>
    </citation>
    <scope>NUCLEOTIDE SEQUENCE [LARGE SCALE GENOMIC DNA]</scope>
    <source>
        <strain>ATCC 2001 / BCRC 20586 / JCM 3761 / NBRC 0622 / NRRL Y-65 / CBS 138</strain>
    </source>
</reference>
<feature type="chain" id="PRO_0000232262" description="ATP-dependent RNA helicase SUB2">
    <location>
        <begin position="1"/>
        <end position="439"/>
    </location>
</feature>
<feature type="domain" description="Helicase ATP-binding" evidence="2">
    <location>
        <begin position="86"/>
        <end position="261"/>
    </location>
</feature>
<feature type="domain" description="Helicase C-terminal" evidence="3">
    <location>
        <begin position="273"/>
        <end position="434"/>
    </location>
</feature>
<feature type="region of interest" description="Disordered" evidence="4">
    <location>
        <begin position="1"/>
        <end position="48"/>
    </location>
</feature>
<feature type="short sequence motif" description="Q motif">
    <location>
        <begin position="55"/>
        <end position="83"/>
    </location>
</feature>
<feature type="short sequence motif" description="DECD box">
    <location>
        <begin position="208"/>
        <end position="211"/>
    </location>
</feature>
<feature type="compositionally biased region" description="Acidic residues" evidence="4">
    <location>
        <begin position="1"/>
        <end position="19"/>
    </location>
</feature>
<feature type="compositionally biased region" description="Polar residues" evidence="4">
    <location>
        <begin position="29"/>
        <end position="40"/>
    </location>
</feature>
<feature type="binding site" evidence="2">
    <location>
        <begin position="99"/>
        <end position="106"/>
    </location>
    <ligand>
        <name>ATP</name>
        <dbReference type="ChEBI" id="CHEBI:30616"/>
    </ligand>
</feature>
<accession>Q6FL17</accession>